<feature type="chain" id="PRO_1000044352" description="Sec-independent protein translocase protein TatA">
    <location>
        <begin position="1"/>
        <end position="75"/>
    </location>
</feature>
<feature type="transmembrane region" description="Helical" evidence="1">
    <location>
        <begin position="1"/>
        <end position="21"/>
    </location>
</feature>
<feature type="region of interest" description="Disordered" evidence="2">
    <location>
        <begin position="43"/>
        <end position="75"/>
    </location>
</feature>
<feature type="compositionally biased region" description="Basic and acidic residues" evidence="2">
    <location>
        <begin position="43"/>
        <end position="54"/>
    </location>
</feature>
<feature type="compositionally biased region" description="Basic and acidic residues" evidence="2">
    <location>
        <begin position="66"/>
        <end position="75"/>
    </location>
</feature>
<proteinExistence type="inferred from homology"/>
<protein>
    <recommendedName>
        <fullName evidence="1">Sec-independent protein translocase protein TatA</fullName>
    </recommendedName>
</protein>
<gene>
    <name evidence="1" type="primary">tatA</name>
    <name type="ordered locus">AZOSEA06890</name>
    <name type="ORF">ebB38</name>
</gene>
<name>TATA_AROAE</name>
<evidence type="ECO:0000255" key="1">
    <source>
        <dbReference type="HAMAP-Rule" id="MF_00236"/>
    </source>
</evidence>
<evidence type="ECO:0000256" key="2">
    <source>
        <dbReference type="SAM" id="MobiDB-lite"/>
    </source>
</evidence>
<sequence>MGSFSIWHWLIVLVIVVLVFGTKKLRNVGQDLGGAVKGFKDGMRDSEKSGEDVQQKIGGDTLDAQATDKSHTVSH</sequence>
<dbReference type="EMBL" id="CR555306">
    <property type="protein sequence ID" value="CAI06812.1"/>
    <property type="molecule type" value="Genomic_DNA"/>
</dbReference>
<dbReference type="RefSeq" id="WP_011236540.1">
    <property type="nucleotide sequence ID" value="NC_006513.1"/>
</dbReference>
<dbReference type="SMR" id="Q5P799"/>
<dbReference type="STRING" id="76114.ebB38"/>
<dbReference type="KEGG" id="eba:ebB38"/>
<dbReference type="eggNOG" id="COG1826">
    <property type="taxonomic scope" value="Bacteria"/>
</dbReference>
<dbReference type="HOGENOM" id="CLU_086034_5_3_4"/>
<dbReference type="OrthoDB" id="7066617at2"/>
<dbReference type="Proteomes" id="UP000006552">
    <property type="component" value="Chromosome"/>
</dbReference>
<dbReference type="GO" id="GO:0033281">
    <property type="term" value="C:TAT protein transport complex"/>
    <property type="evidence" value="ECO:0007669"/>
    <property type="project" value="UniProtKB-UniRule"/>
</dbReference>
<dbReference type="GO" id="GO:0008320">
    <property type="term" value="F:protein transmembrane transporter activity"/>
    <property type="evidence" value="ECO:0007669"/>
    <property type="project" value="UniProtKB-UniRule"/>
</dbReference>
<dbReference type="GO" id="GO:0043953">
    <property type="term" value="P:protein transport by the Tat complex"/>
    <property type="evidence" value="ECO:0007669"/>
    <property type="project" value="UniProtKB-UniRule"/>
</dbReference>
<dbReference type="Gene3D" id="1.20.5.3310">
    <property type="match status" value="1"/>
</dbReference>
<dbReference type="HAMAP" id="MF_00236">
    <property type="entry name" value="TatA_E"/>
    <property type="match status" value="1"/>
</dbReference>
<dbReference type="InterPro" id="IPR003369">
    <property type="entry name" value="TatA/B/E"/>
</dbReference>
<dbReference type="InterPro" id="IPR006312">
    <property type="entry name" value="TatA/E"/>
</dbReference>
<dbReference type="NCBIfam" id="NF002813">
    <property type="entry name" value="PRK02958.1"/>
    <property type="match status" value="1"/>
</dbReference>
<dbReference type="NCBIfam" id="TIGR01411">
    <property type="entry name" value="tatAE"/>
    <property type="match status" value="1"/>
</dbReference>
<dbReference type="PANTHER" id="PTHR42982">
    <property type="entry name" value="SEC-INDEPENDENT PROTEIN TRANSLOCASE PROTEIN TATA"/>
    <property type="match status" value="1"/>
</dbReference>
<dbReference type="PANTHER" id="PTHR42982:SF1">
    <property type="entry name" value="SEC-INDEPENDENT PROTEIN TRANSLOCASE PROTEIN TATA"/>
    <property type="match status" value="1"/>
</dbReference>
<dbReference type="Pfam" id="PF02416">
    <property type="entry name" value="TatA_B_E"/>
    <property type="match status" value="1"/>
</dbReference>
<accession>Q5P799</accession>
<comment type="function">
    <text evidence="1">Part of the twin-arginine translocation (Tat) system that transports large folded proteins containing a characteristic twin-arginine motif in their signal peptide across membranes. TatA could form the protein-conducting channel of the Tat system.</text>
</comment>
<comment type="subunit">
    <text evidence="1">The Tat system comprises two distinct complexes: a TatABC complex, containing multiple copies of TatA, TatB and TatC subunits, and a separate TatA complex, containing only TatA subunits. Substrates initially bind to the TatABC complex, which probably triggers association of the separate TatA complex to form the active translocon.</text>
</comment>
<comment type="subcellular location">
    <subcellularLocation>
        <location evidence="1">Cell inner membrane</location>
        <topology evidence="1">Single-pass membrane protein</topology>
    </subcellularLocation>
</comment>
<comment type="similarity">
    <text evidence="1">Belongs to the TatA/E family.</text>
</comment>
<reference key="1">
    <citation type="journal article" date="2005" name="Arch. Microbiol.">
        <title>The genome sequence of an anaerobic aromatic-degrading denitrifying bacterium, strain EbN1.</title>
        <authorList>
            <person name="Rabus R."/>
            <person name="Kube M."/>
            <person name="Heider J."/>
            <person name="Beck A."/>
            <person name="Heitmann K."/>
            <person name="Widdel F."/>
            <person name="Reinhardt R."/>
        </authorList>
    </citation>
    <scope>NUCLEOTIDE SEQUENCE [LARGE SCALE GENOMIC DNA]</scope>
    <source>
        <strain>DSM 19018 / LMG 30748 / EbN1</strain>
    </source>
</reference>
<organism>
    <name type="scientific">Aromatoleum aromaticum (strain DSM 19018 / LMG 30748 / EbN1)</name>
    <name type="common">Azoarcus sp. (strain EbN1)</name>
    <dbReference type="NCBI Taxonomy" id="76114"/>
    <lineage>
        <taxon>Bacteria</taxon>
        <taxon>Pseudomonadati</taxon>
        <taxon>Pseudomonadota</taxon>
        <taxon>Betaproteobacteria</taxon>
        <taxon>Rhodocyclales</taxon>
        <taxon>Rhodocyclaceae</taxon>
        <taxon>Aromatoleum</taxon>
    </lineage>
</organism>
<keyword id="KW-0997">Cell inner membrane</keyword>
<keyword id="KW-1003">Cell membrane</keyword>
<keyword id="KW-0472">Membrane</keyword>
<keyword id="KW-0653">Protein transport</keyword>
<keyword id="KW-1185">Reference proteome</keyword>
<keyword id="KW-0811">Translocation</keyword>
<keyword id="KW-0812">Transmembrane</keyword>
<keyword id="KW-1133">Transmembrane helix</keyword>
<keyword id="KW-0813">Transport</keyword>